<gene>
    <name evidence="1" type="primary">fmt</name>
    <name type="ordered locus">OCAR_7539</name>
    <name type="ordered locus">OCA5_c06010</name>
</gene>
<feature type="chain" id="PRO_1000098423" description="Methionyl-tRNA formyltransferase">
    <location>
        <begin position="1"/>
        <end position="310"/>
    </location>
</feature>
<feature type="binding site" evidence="1">
    <location>
        <begin position="111"/>
        <end position="114"/>
    </location>
    <ligand>
        <name>(6S)-5,6,7,8-tetrahydrofolate</name>
        <dbReference type="ChEBI" id="CHEBI:57453"/>
    </ligand>
</feature>
<reference key="1">
    <citation type="journal article" date="2008" name="J. Bacteriol.">
        <title>Genome sequence of the chemolithoautotrophic bacterium Oligotropha carboxidovorans OM5T.</title>
        <authorList>
            <person name="Paul D."/>
            <person name="Bridges S."/>
            <person name="Burgess S.C."/>
            <person name="Dandass Y."/>
            <person name="Lawrence M.L."/>
        </authorList>
    </citation>
    <scope>NUCLEOTIDE SEQUENCE [LARGE SCALE GENOMIC DNA]</scope>
    <source>
        <strain>ATCC 49405 / DSM 1227 / KCTC 32145 / OM5</strain>
    </source>
</reference>
<reference key="2">
    <citation type="journal article" date="2011" name="J. Bacteriol.">
        <title>Complete genome sequences of the chemolithoautotrophic Oligotropha carboxidovorans strains OM4 and OM5.</title>
        <authorList>
            <person name="Volland S."/>
            <person name="Rachinger M."/>
            <person name="Strittmatter A."/>
            <person name="Daniel R."/>
            <person name="Gottschalk G."/>
            <person name="Meyer O."/>
        </authorList>
    </citation>
    <scope>NUCLEOTIDE SEQUENCE [LARGE SCALE GENOMIC DNA]</scope>
    <source>
        <strain>ATCC 49405 / DSM 1227 / KCTC 32145 / OM5</strain>
    </source>
</reference>
<protein>
    <recommendedName>
        <fullName evidence="1">Methionyl-tRNA formyltransferase</fullName>
        <ecNumber evidence="1">2.1.2.9</ecNumber>
    </recommendedName>
</protein>
<accession>B6JJP7</accession>
<accession>F8BWX3</accession>
<comment type="function">
    <text evidence="1">Attaches a formyl group to the free amino group of methionyl-tRNA(fMet). The formyl group appears to play a dual role in the initiator identity of N-formylmethionyl-tRNA by promoting its recognition by IF2 and preventing the misappropriation of this tRNA by the elongation apparatus.</text>
</comment>
<comment type="catalytic activity">
    <reaction evidence="1">
        <text>L-methionyl-tRNA(fMet) + (6R)-10-formyltetrahydrofolate = N-formyl-L-methionyl-tRNA(fMet) + (6S)-5,6,7,8-tetrahydrofolate + H(+)</text>
        <dbReference type="Rhea" id="RHEA:24380"/>
        <dbReference type="Rhea" id="RHEA-COMP:9952"/>
        <dbReference type="Rhea" id="RHEA-COMP:9953"/>
        <dbReference type="ChEBI" id="CHEBI:15378"/>
        <dbReference type="ChEBI" id="CHEBI:57453"/>
        <dbReference type="ChEBI" id="CHEBI:78530"/>
        <dbReference type="ChEBI" id="CHEBI:78844"/>
        <dbReference type="ChEBI" id="CHEBI:195366"/>
        <dbReference type="EC" id="2.1.2.9"/>
    </reaction>
</comment>
<comment type="similarity">
    <text evidence="1">Belongs to the Fmt family.</text>
</comment>
<sequence length="310" mass="33181">MPLRLIFMGTPDFAVPTLRELHAQGHEIAAVYTRAAKPAGRGMKLQITPVEKAARELGLPVLTPSTLRTPEAEAEFRAHNADAAVVVAYGMILPANILNAVPRGCFNLHASLLPRWRGAAPIQRAIMTGDAESGVMVMKMDVGLDTGDVAMTDRLQITDAMTAQDLHDALAPRGARLMAQAMVALEQGSLNLKPQGEEGVTYAAKIGKAEAKIDWARPAHDVLRHIHGLSPFPGAWFEVAIDGAPVRIKVLRCELVKGSGAPGALLDDRLTIACGEGAIRLLDVQRAGKQPMRALDFLRGTPLIPPLSVM</sequence>
<dbReference type="EC" id="2.1.2.9" evidence="1"/>
<dbReference type="EMBL" id="CP001196">
    <property type="protein sequence ID" value="ACI94641.1"/>
    <property type="molecule type" value="Genomic_DNA"/>
</dbReference>
<dbReference type="EMBL" id="CP002826">
    <property type="protein sequence ID" value="AEI05325.1"/>
    <property type="molecule type" value="Genomic_DNA"/>
</dbReference>
<dbReference type="RefSeq" id="WP_012564665.1">
    <property type="nucleotide sequence ID" value="NC_015684.1"/>
</dbReference>
<dbReference type="SMR" id="B6JJP7"/>
<dbReference type="STRING" id="504832.OCA5_c06010"/>
<dbReference type="KEGG" id="oca:OCAR_7539"/>
<dbReference type="KEGG" id="ocg:OCA5_c06010"/>
<dbReference type="PATRIC" id="fig|504832.7.peg.629"/>
<dbReference type="eggNOG" id="COG0223">
    <property type="taxonomic scope" value="Bacteria"/>
</dbReference>
<dbReference type="HOGENOM" id="CLU_033347_1_2_5"/>
<dbReference type="OrthoDB" id="9802815at2"/>
<dbReference type="Proteomes" id="UP000007730">
    <property type="component" value="Chromosome"/>
</dbReference>
<dbReference type="GO" id="GO:0005829">
    <property type="term" value="C:cytosol"/>
    <property type="evidence" value="ECO:0007669"/>
    <property type="project" value="TreeGrafter"/>
</dbReference>
<dbReference type="GO" id="GO:0004479">
    <property type="term" value="F:methionyl-tRNA formyltransferase activity"/>
    <property type="evidence" value="ECO:0007669"/>
    <property type="project" value="UniProtKB-UniRule"/>
</dbReference>
<dbReference type="CDD" id="cd08646">
    <property type="entry name" value="FMT_core_Met-tRNA-FMT_N"/>
    <property type="match status" value="1"/>
</dbReference>
<dbReference type="CDD" id="cd08704">
    <property type="entry name" value="Met_tRNA_FMT_C"/>
    <property type="match status" value="1"/>
</dbReference>
<dbReference type="Gene3D" id="3.10.25.10">
    <property type="entry name" value="Formyl transferase, C-terminal domain"/>
    <property type="match status" value="1"/>
</dbReference>
<dbReference type="Gene3D" id="3.40.50.170">
    <property type="entry name" value="Formyl transferase, N-terminal domain"/>
    <property type="match status" value="1"/>
</dbReference>
<dbReference type="HAMAP" id="MF_00182">
    <property type="entry name" value="Formyl_trans"/>
    <property type="match status" value="1"/>
</dbReference>
<dbReference type="InterPro" id="IPR005794">
    <property type="entry name" value="Fmt"/>
</dbReference>
<dbReference type="InterPro" id="IPR005793">
    <property type="entry name" value="Formyl_trans_C"/>
</dbReference>
<dbReference type="InterPro" id="IPR037022">
    <property type="entry name" value="Formyl_trans_C_sf"/>
</dbReference>
<dbReference type="InterPro" id="IPR002376">
    <property type="entry name" value="Formyl_transf_N"/>
</dbReference>
<dbReference type="InterPro" id="IPR036477">
    <property type="entry name" value="Formyl_transf_N_sf"/>
</dbReference>
<dbReference type="InterPro" id="IPR011034">
    <property type="entry name" value="Formyl_transferase-like_C_sf"/>
</dbReference>
<dbReference type="InterPro" id="IPR001555">
    <property type="entry name" value="GART_AS"/>
</dbReference>
<dbReference type="InterPro" id="IPR044135">
    <property type="entry name" value="Met-tRNA-FMT_C"/>
</dbReference>
<dbReference type="InterPro" id="IPR041711">
    <property type="entry name" value="Met-tRNA-FMT_N"/>
</dbReference>
<dbReference type="NCBIfam" id="TIGR00460">
    <property type="entry name" value="fmt"/>
    <property type="match status" value="1"/>
</dbReference>
<dbReference type="PANTHER" id="PTHR11138">
    <property type="entry name" value="METHIONYL-TRNA FORMYLTRANSFERASE"/>
    <property type="match status" value="1"/>
</dbReference>
<dbReference type="PANTHER" id="PTHR11138:SF5">
    <property type="entry name" value="METHIONYL-TRNA FORMYLTRANSFERASE, MITOCHONDRIAL"/>
    <property type="match status" value="1"/>
</dbReference>
<dbReference type="Pfam" id="PF02911">
    <property type="entry name" value="Formyl_trans_C"/>
    <property type="match status" value="1"/>
</dbReference>
<dbReference type="Pfam" id="PF00551">
    <property type="entry name" value="Formyl_trans_N"/>
    <property type="match status" value="1"/>
</dbReference>
<dbReference type="SUPFAM" id="SSF50486">
    <property type="entry name" value="FMT C-terminal domain-like"/>
    <property type="match status" value="1"/>
</dbReference>
<dbReference type="SUPFAM" id="SSF53328">
    <property type="entry name" value="Formyltransferase"/>
    <property type="match status" value="1"/>
</dbReference>
<dbReference type="PROSITE" id="PS00373">
    <property type="entry name" value="GART"/>
    <property type="match status" value="1"/>
</dbReference>
<keyword id="KW-0648">Protein biosynthesis</keyword>
<keyword id="KW-1185">Reference proteome</keyword>
<keyword id="KW-0808">Transferase</keyword>
<name>FMT_AFIC5</name>
<evidence type="ECO:0000255" key="1">
    <source>
        <dbReference type="HAMAP-Rule" id="MF_00182"/>
    </source>
</evidence>
<proteinExistence type="inferred from homology"/>
<organism>
    <name type="scientific">Afipia carboxidovorans (strain ATCC 49405 / DSM 1227 / KCTC 32145 / OM5)</name>
    <name type="common">Oligotropha carboxidovorans</name>
    <dbReference type="NCBI Taxonomy" id="504832"/>
    <lineage>
        <taxon>Bacteria</taxon>
        <taxon>Pseudomonadati</taxon>
        <taxon>Pseudomonadota</taxon>
        <taxon>Alphaproteobacteria</taxon>
        <taxon>Hyphomicrobiales</taxon>
        <taxon>Nitrobacteraceae</taxon>
        <taxon>Afipia</taxon>
    </lineage>
</organism>